<reference key="1">
    <citation type="journal article" date="1982" name="J. Biol. Chem.">
        <title>Gene conversion of two functional goat alpha-globin genes preserves only minimal flanking sequences.</title>
        <authorList>
            <person name="Schon E.A."/>
            <person name="Wernke S.M."/>
            <person name="Lingrel J.B."/>
        </authorList>
    </citation>
    <scope>NUCLEOTIDE SEQUENCE [GENOMIC DNA]</scope>
    <scope>VARIANT TYR-76</scope>
</reference>
<reference key="2">
    <citation type="journal article" date="1968" name="J. Biol. Chem.">
        <title>The structure of goat hemoglobins. II. Structural studies of the alpha chains of the hemoglobins A and B.</title>
        <authorList>
            <person name="Huisman T.H.J."/>
            <person name="Brandt G."/>
            <person name="Wilson J.B."/>
        </authorList>
    </citation>
    <scope>PARTIAL PROTEIN SEQUENCE</scope>
    <scope>CLEAVAGE OF INITIATOR METHIONINE</scope>
    <scope>VARIANT TYR-76</scope>
</reference>
<reference key="3">
    <citation type="journal article" date="2007" name="Acta Crystallogr. F">
        <title>Crystallization of sheep (Ovis aries) and goat (Capra hircus) haemoglobins under unbuffered low-salt conditions.</title>
        <authorList>
            <person name="Neelagandan K."/>
            <person name="Moorthy P.S."/>
            <person name="Balasubramanian M."/>
            <person name="Ponnuswamy M.N."/>
        </authorList>
    </citation>
    <scope>X-RAY CRYSTALLOGRAPHY (2.61 ANGSTROMS) OF 2-142</scope>
</reference>
<reference key="4">
    <citation type="journal article" date="2009" name="Protein Pept. Lett.">
        <title>Purification, crystallization and preliminary X-ray diffraction studies on goat (Capra hircus) hemoglobin - a low oxygen affinity species.</title>
        <authorList>
            <person name="Moorthy P.S."/>
            <person name="Neelagandan K."/>
            <person name="Balasubramanian M."/>
            <person name="Ponnuswamy M.N."/>
        </authorList>
    </citation>
    <scope>X-RAY CRYSTALLOGRAPHY (3.0 ANGSTROMS) OF 2-142</scope>
</reference>
<gene>
    <name type="primary">HBA1</name>
</gene>
<accession>P0CH25</accession>
<accession>P01970</accession>
<accession>P68238</accession>
<dbReference type="EMBL" id="J00043">
    <property type="protein sequence ID" value="AAA30909.1"/>
    <property type="molecule type" value="Genomic_DNA"/>
</dbReference>
<dbReference type="PIR" id="A92379">
    <property type="entry name" value="HAGT"/>
</dbReference>
<dbReference type="PDB" id="2RI4">
    <property type="method" value="X-ray"/>
    <property type="resolution" value="2.70 A"/>
    <property type="chains" value="A/C/I/K=2-142"/>
</dbReference>
<dbReference type="PDB" id="3D1A">
    <property type="method" value="X-ray"/>
    <property type="resolution" value="2.61 A"/>
    <property type="chains" value="A/C=1-142"/>
</dbReference>
<dbReference type="PDB" id="3EU1">
    <property type="method" value="X-ray"/>
    <property type="resolution" value="3.00 A"/>
    <property type="chains" value="A/C=2-142"/>
</dbReference>
<dbReference type="PDBsum" id="2RI4"/>
<dbReference type="PDBsum" id="3D1A"/>
<dbReference type="PDBsum" id="3EU1"/>
<dbReference type="SMR" id="P0CH25"/>
<dbReference type="STRING" id="9925.ENSCHIP00000030098"/>
<dbReference type="Ensembl" id="ENSCHIT00000037968.1">
    <property type="protein sequence ID" value="ENSCHIP00000030098.1"/>
    <property type="gene ID" value="ENSCHIG00000024771.1"/>
</dbReference>
<dbReference type="Ensembl" id="ENSCHIT00020044462">
    <property type="protein sequence ID" value="ENSCHIP00020033583"/>
    <property type="gene ID" value="ENSCHIG00020021412"/>
</dbReference>
<dbReference type="Ensembl" id="ENSCHIT00040056770">
    <property type="protein sequence ID" value="ENSCHIP00040045416"/>
    <property type="gene ID" value="ENSCHIG00040026458"/>
</dbReference>
<dbReference type="KEGG" id="chx:102168680"/>
<dbReference type="GeneTree" id="ENSGT00940000154590"/>
<dbReference type="OMA" id="MFTSFPT"/>
<dbReference type="OrthoDB" id="8751793at2759"/>
<dbReference type="EvolutionaryTrace" id="P0CH25"/>
<dbReference type="Proteomes" id="UP000291000">
    <property type="component" value="Chromosome 25"/>
</dbReference>
<dbReference type="Proteomes" id="UP000694566">
    <property type="component" value="Unplaced"/>
</dbReference>
<dbReference type="Bgee" id="ENSCHIG00000024771">
    <property type="expression patterns" value="Expressed in ovary and 17 other cell types or tissues"/>
</dbReference>
<dbReference type="GO" id="GO:0072562">
    <property type="term" value="C:blood microparticle"/>
    <property type="evidence" value="ECO:0007669"/>
    <property type="project" value="TreeGrafter"/>
</dbReference>
<dbReference type="GO" id="GO:0031838">
    <property type="term" value="C:haptoglobin-hemoglobin complex"/>
    <property type="evidence" value="ECO:0007669"/>
    <property type="project" value="TreeGrafter"/>
</dbReference>
<dbReference type="GO" id="GO:0005833">
    <property type="term" value="C:hemoglobin complex"/>
    <property type="evidence" value="ECO:0007669"/>
    <property type="project" value="InterPro"/>
</dbReference>
<dbReference type="GO" id="GO:0031720">
    <property type="term" value="F:haptoglobin binding"/>
    <property type="evidence" value="ECO:0007669"/>
    <property type="project" value="TreeGrafter"/>
</dbReference>
<dbReference type="GO" id="GO:0020037">
    <property type="term" value="F:heme binding"/>
    <property type="evidence" value="ECO:0007669"/>
    <property type="project" value="InterPro"/>
</dbReference>
<dbReference type="GO" id="GO:0005506">
    <property type="term" value="F:iron ion binding"/>
    <property type="evidence" value="ECO:0007669"/>
    <property type="project" value="InterPro"/>
</dbReference>
<dbReference type="GO" id="GO:0043177">
    <property type="term" value="F:organic acid binding"/>
    <property type="evidence" value="ECO:0007669"/>
    <property type="project" value="TreeGrafter"/>
</dbReference>
<dbReference type="GO" id="GO:0019825">
    <property type="term" value="F:oxygen binding"/>
    <property type="evidence" value="ECO:0007669"/>
    <property type="project" value="InterPro"/>
</dbReference>
<dbReference type="GO" id="GO:0005344">
    <property type="term" value="F:oxygen carrier activity"/>
    <property type="evidence" value="ECO:0007669"/>
    <property type="project" value="UniProtKB-KW"/>
</dbReference>
<dbReference type="GO" id="GO:0004601">
    <property type="term" value="F:peroxidase activity"/>
    <property type="evidence" value="ECO:0007669"/>
    <property type="project" value="TreeGrafter"/>
</dbReference>
<dbReference type="GO" id="GO:0042744">
    <property type="term" value="P:hydrogen peroxide catabolic process"/>
    <property type="evidence" value="ECO:0007669"/>
    <property type="project" value="TreeGrafter"/>
</dbReference>
<dbReference type="CDD" id="cd08927">
    <property type="entry name" value="Hb-alpha-like"/>
    <property type="match status" value="1"/>
</dbReference>
<dbReference type="FunFam" id="1.10.490.10:FF:000002">
    <property type="entry name" value="Hemoglobin subunit alpha"/>
    <property type="match status" value="1"/>
</dbReference>
<dbReference type="Gene3D" id="1.10.490.10">
    <property type="entry name" value="Globins"/>
    <property type="match status" value="1"/>
</dbReference>
<dbReference type="InterPro" id="IPR000971">
    <property type="entry name" value="Globin"/>
</dbReference>
<dbReference type="InterPro" id="IPR009050">
    <property type="entry name" value="Globin-like_sf"/>
</dbReference>
<dbReference type="InterPro" id="IPR012292">
    <property type="entry name" value="Globin/Proto"/>
</dbReference>
<dbReference type="InterPro" id="IPR002338">
    <property type="entry name" value="Hemoglobin_a-typ"/>
</dbReference>
<dbReference type="InterPro" id="IPR050056">
    <property type="entry name" value="Hemoglobin_oxygen_transport"/>
</dbReference>
<dbReference type="InterPro" id="IPR002339">
    <property type="entry name" value="Hemoglobin_pi"/>
</dbReference>
<dbReference type="PANTHER" id="PTHR11442">
    <property type="entry name" value="HEMOGLOBIN FAMILY MEMBER"/>
    <property type="match status" value="1"/>
</dbReference>
<dbReference type="PANTHER" id="PTHR11442:SF48">
    <property type="entry name" value="HEMOGLOBIN SUBUNIT ALPHA"/>
    <property type="match status" value="1"/>
</dbReference>
<dbReference type="Pfam" id="PF00042">
    <property type="entry name" value="Globin"/>
    <property type="match status" value="1"/>
</dbReference>
<dbReference type="PRINTS" id="PR00612">
    <property type="entry name" value="ALPHAHAEM"/>
</dbReference>
<dbReference type="PRINTS" id="PR00815">
    <property type="entry name" value="PIHAEM"/>
</dbReference>
<dbReference type="SUPFAM" id="SSF46458">
    <property type="entry name" value="Globin-like"/>
    <property type="match status" value="1"/>
</dbReference>
<dbReference type="PROSITE" id="PS01033">
    <property type="entry name" value="GLOBIN"/>
    <property type="match status" value="1"/>
</dbReference>
<name>HBA1_CAPHI</name>
<sequence>MVLSAADKSNVKAAWGKVGGNAGAYGAEALERMFLSFPTTKTYFPHFDLSHGSAQVKGHGEKVAAALTKAVGHLDDLPGTLSDLSDLHAHKLRVDPVNFKLLSHSLLVTLACHLPNDFTPAVHASLDKFLANVSTVLTSKYR</sequence>
<proteinExistence type="evidence at protein level"/>
<comment type="function">
    <text evidence="1">Involved in oxygen transport from the lung to the various peripheral tissues.</text>
</comment>
<comment type="function">
    <molecule>Hemopressin</molecule>
    <text evidence="2">Hemopressin acts as an antagonist peptide of the cannabinoid receptor CNR1. Hemopressin-binding efficiently blocks cannabinoid receptor CNR1 and subsequent signaling.</text>
</comment>
<comment type="subunit">
    <text evidence="1">Heterotetramer of two alpha chains and two beta chains.</text>
</comment>
<comment type="miscellaneous">
    <text>Adult goat and other mammalian species produce unequal amounts of alpha-globin from non-allelic loci.</text>
</comment>
<comment type="similarity">
    <text evidence="3">Belongs to the globin family.</text>
</comment>
<organism>
    <name type="scientific">Capra hircus</name>
    <name type="common">Goat</name>
    <dbReference type="NCBI Taxonomy" id="9925"/>
    <lineage>
        <taxon>Eukaryota</taxon>
        <taxon>Metazoa</taxon>
        <taxon>Chordata</taxon>
        <taxon>Craniata</taxon>
        <taxon>Vertebrata</taxon>
        <taxon>Euteleostomi</taxon>
        <taxon>Mammalia</taxon>
        <taxon>Eutheria</taxon>
        <taxon>Laurasiatheria</taxon>
        <taxon>Artiodactyla</taxon>
        <taxon>Ruminantia</taxon>
        <taxon>Pecora</taxon>
        <taxon>Bovidae</taxon>
        <taxon>Caprinae</taxon>
        <taxon>Capra</taxon>
    </lineage>
</organism>
<protein>
    <recommendedName>
        <fullName>Hemoglobin subunit alpha-1</fullName>
    </recommendedName>
    <alternativeName>
        <fullName>Alpha-1-globin</fullName>
    </alternativeName>
    <alternativeName>
        <fullName>Hemoglobin alpha-1 chain</fullName>
    </alternativeName>
    <component>
        <recommendedName>
            <fullName evidence="2">Hemopressin</fullName>
        </recommendedName>
    </component>
</protein>
<keyword id="KW-0002">3D-structure</keyword>
<keyword id="KW-0903">Direct protein sequencing</keyword>
<keyword id="KW-0349">Heme</keyword>
<keyword id="KW-0408">Iron</keyword>
<keyword id="KW-0479">Metal-binding</keyword>
<keyword id="KW-0561">Oxygen transport</keyword>
<keyword id="KW-1185">Reference proteome</keyword>
<keyword id="KW-0813">Transport</keyword>
<feature type="initiator methionine" description="Removed" evidence="4">
    <location>
        <position position="1"/>
    </location>
</feature>
<feature type="chain" id="PRO_0000052582" description="Hemoglobin subunit alpha-1">
    <location>
        <begin position="2"/>
        <end position="142"/>
    </location>
</feature>
<feature type="peptide" id="PRO_0000455849" description="Hemopressin" evidence="2">
    <location>
        <begin position="96"/>
        <end position="104"/>
    </location>
</feature>
<feature type="domain" description="Globin" evidence="3">
    <location>
        <begin position="2"/>
        <end position="142"/>
    </location>
</feature>
<feature type="binding site" evidence="3">
    <location>
        <position position="59"/>
    </location>
    <ligand>
        <name>O2</name>
        <dbReference type="ChEBI" id="CHEBI:15379"/>
    </ligand>
</feature>
<feature type="binding site" description="proximal binding residue" evidence="3">
    <location>
        <position position="88"/>
    </location>
    <ligand>
        <name>heme b</name>
        <dbReference type="ChEBI" id="CHEBI:60344"/>
    </ligand>
    <ligandPart>
        <name>Fe</name>
        <dbReference type="ChEBI" id="CHEBI:18248"/>
    </ligandPart>
</feature>
<feature type="sequence variant" description="In alpha-1-B." evidence="4 5">
    <original>D</original>
    <variation>Y</variation>
    <location>
        <position position="76"/>
    </location>
</feature>
<feature type="helix" evidence="7">
    <location>
        <begin position="6"/>
        <end position="16"/>
    </location>
</feature>
<feature type="helix" evidence="7">
    <location>
        <begin position="19"/>
        <end position="21"/>
    </location>
</feature>
<feature type="helix" evidence="7">
    <location>
        <begin position="22"/>
        <end position="36"/>
    </location>
</feature>
<feature type="helix" evidence="7">
    <location>
        <begin position="38"/>
        <end position="43"/>
    </location>
</feature>
<feature type="turn" evidence="8">
    <location>
        <begin position="51"/>
        <end position="53"/>
    </location>
</feature>
<feature type="helix" evidence="7">
    <location>
        <begin position="54"/>
        <end position="72"/>
    </location>
</feature>
<feature type="turn" evidence="7">
    <location>
        <begin position="73"/>
        <end position="75"/>
    </location>
</feature>
<feature type="helix" evidence="7">
    <location>
        <begin position="77"/>
        <end position="90"/>
    </location>
</feature>
<feature type="helix" evidence="7">
    <location>
        <begin position="98"/>
        <end position="113"/>
    </location>
</feature>
<feature type="turn" evidence="6">
    <location>
        <begin position="115"/>
        <end position="117"/>
    </location>
</feature>
<feature type="helix" evidence="7">
    <location>
        <begin position="120"/>
        <end position="138"/>
    </location>
</feature>
<evidence type="ECO:0000250" key="1"/>
<evidence type="ECO:0000250" key="2">
    <source>
        <dbReference type="UniProtKB" id="P01946"/>
    </source>
</evidence>
<evidence type="ECO:0000255" key="3">
    <source>
        <dbReference type="PROSITE-ProRule" id="PRU00238"/>
    </source>
</evidence>
<evidence type="ECO:0000269" key="4">
    <source>
    </source>
</evidence>
<evidence type="ECO:0000269" key="5">
    <source>
    </source>
</evidence>
<evidence type="ECO:0007829" key="6">
    <source>
        <dbReference type="PDB" id="2RI4"/>
    </source>
</evidence>
<evidence type="ECO:0007829" key="7">
    <source>
        <dbReference type="PDB" id="3D1A"/>
    </source>
</evidence>
<evidence type="ECO:0007829" key="8">
    <source>
        <dbReference type="PDB" id="3EU1"/>
    </source>
</evidence>